<comment type="function">
    <text evidence="6">Inhibits ion channels.</text>
</comment>
<comment type="subcellular location">
    <subcellularLocation>
        <location evidence="6">Secreted</location>
    </subcellularLocation>
    <subcellularLocation>
        <location evidence="6">Nematocyst</location>
    </subcellularLocation>
</comment>
<comment type="similarity">
    <text evidence="8">Belongs to the sea anemone BBH family.</text>
</comment>
<comment type="caution">
    <text evidence="6">Opinions are divided on whether Anemonia viridis (Forsskal, 1775) and Anemonia sulcata (Pennant, 1777) are separate species.</text>
</comment>
<sequence>MKSIFLVFFAVCLVKAEAGKGRKREPNIINPPCRECYVQDSSGNCVYDKWGCGGARKREPNIINPPCRECYVQDSSGNCVYDKWGCGGARKREPNIINPPCRECYVQDSSGNCVYDKWGCGGARKREPNIINPPCRECYVQDSSGNCVYDKWGCGGARK</sequence>
<name>BBHDB_ANEVI</name>
<accession>P0DMZ9</accession>
<organism>
    <name type="scientific">Anemonia viridis</name>
    <name type="common">Snakelocks anemone</name>
    <dbReference type="NCBI Taxonomy" id="51769"/>
    <lineage>
        <taxon>Eukaryota</taxon>
        <taxon>Metazoa</taxon>
        <taxon>Cnidaria</taxon>
        <taxon>Anthozoa</taxon>
        <taxon>Hexacorallia</taxon>
        <taxon>Actiniaria</taxon>
        <taxon>Actiniidae</taxon>
        <taxon>Anemonia</taxon>
    </lineage>
</organism>
<reference key="1">
    <citation type="journal article" date="2009" name="BMC Genomics">
        <title>Comprehensive EST analysis of the symbiotic sea anemone, Anemonia viridis.</title>
        <authorList>
            <person name="Sabourault C."/>
            <person name="Ganot P."/>
            <person name="Deleury E."/>
            <person name="Allemand D."/>
            <person name="Furla P."/>
        </authorList>
    </citation>
    <scope>NUCLEOTIDE SEQUENCE [MRNA]</scope>
</reference>
<reference key="2">
    <citation type="journal article" date="2011" name="BMC Genomics">
        <title>The mining of toxin-like polypeptides from EST database by single residue distribution analysis.</title>
        <authorList>
            <person name="Kozlov S."/>
            <person name="Grishin E."/>
        </authorList>
    </citation>
    <scope>NOMENCLATURE</scope>
</reference>
<reference key="3">
    <citation type="journal article" date="2012" name="Toxicon">
        <title>Development of a rational nomenclature for naming peptide and protein toxins from sea anemones.</title>
        <authorList>
            <person name="Oliveira J.S."/>
            <person name="Fuentes-Silva D."/>
            <person name="King G.F."/>
        </authorList>
    </citation>
    <scope>NOMENCLATURE</scope>
</reference>
<reference key="4">
    <citation type="journal article" date="2013" name="J. Biol. Chem.">
        <title>Sea anemone peptide with uncommon beta-hairpin structure inhibits acid-sensing ion channel 3 (ASIC3) and reveals analgesic activity.</title>
        <authorList>
            <person name="Osmakov D.I."/>
            <person name="Kozlov S.A."/>
            <person name="Andreev Y.A."/>
            <person name="Koshelev S.G."/>
            <person name="Sanamyan N.P."/>
            <person name="Sanamyan K.E."/>
            <person name="Dyachenko I.A."/>
            <person name="Bondarenko D.A."/>
            <person name="Murashev A.N."/>
            <person name="Mineev K.S."/>
            <person name="Arseniev A.S."/>
            <person name="Grishin E.V."/>
        </authorList>
    </citation>
    <scope>NOMENCLATURE</scope>
</reference>
<evidence type="ECO:0000250" key="1">
    <source>
        <dbReference type="UniProtKB" id="R4ZCU1"/>
    </source>
</evidence>
<evidence type="ECO:0000255" key="2"/>
<evidence type="ECO:0000303" key="3">
    <source>
    </source>
</evidence>
<evidence type="ECO:0000303" key="4">
    <source>
    </source>
</evidence>
<evidence type="ECO:0000303" key="5">
    <source>
    </source>
</evidence>
<evidence type="ECO:0000305" key="6"/>
<evidence type="ECO:0000305" key="7">
    <source>
    </source>
</evidence>
<evidence type="ECO:0000305" key="8">
    <source>
    </source>
</evidence>
<dbReference type="EMBL" id="FK736087">
    <property type="status" value="NOT_ANNOTATED_CDS"/>
    <property type="molecule type" value="mRNA"/>
</dbReference>
<dbReference type="SMR" id="P0DMZ9"/>
<dbReference type="GO" id="GO:0005576">
    <property type="term" value="C:extracellular region"/>
    <property type="evidence" value="ECO:0007669"/>
    <property type="project" value="UniProtKB-SubCell"/>
</dbReference>
<dbReference type="GO" id="GO:0042151">
    <property type="term" value="C:nematocyst"/>
    <property type="evidence" value="ECO:0007669"/>
    <property type="project" value="UniProtKB-SubCell"/>
</dbReference>
<dbReference type="CDD" id="cd21873">
    <property type="entry name" value="Ugr_9a-1-like"/>
    <property type="match status" value="4"/>
</dbReference>
<proteinExistence type="evidence at transcript level"/>
<feature type="signal peptide" evidence="2">
    <location>
        <begin position="1"/>
        <end position="18"/>
    </location>
</feature>
<feature type="propeptide" id="PRO_0000433722" evidence="7">
    <location>
        <begin position="19"/>
        <end position="26"/>
    </location>
</feature>
<feature type="peptide" id="PRO_0000433723" description="U-actitoxin-Avd13b">
    <location>
        <begin position="27"/>
        <end position="55"/>
    </location>
</feature>
<feature type="propeptide" id="PRO_0000433724" evidence="7">
    <location>
        <begin position="59"/>
        <end position="60"/>
    </location>
</feature>
<feature type="peptide" id="PRO_0000433725" description="U-actitoxin-Avd13b">
    <location>
        <begin position="61"/>
        <end position="89"/>
    </location>
</feature>
<feature type="propeptide" id="PRO_0000433726" evidence="7">
    <location>
        <begin position="93"/>
        <end position="94"/>
    </location>
</feature>
<feature type="peptide" id="PRO_0000433727" description="U-actitoxin-Avd13b">
    <location>
        <begin position="95"/>
        <end position="123"/>
    </location>
</feature>
<feature type="propeptide" id="PRO_0000433728" evidence="7">
    <location>
        <begin position="127"/>
        <end position="128"/>
    </location>
</feature>
<feature type="peptide" id="PRO_0000433729" description="U-actitoxin-Avd13b">
    <location>
        <begin position="129"/>
        <end position="157"/>
    </location>
</feature>
<feature type="disulfide bond" evidence="1">
    <location>
        <begin position="33"/>
        <end position="45"/>
    </location>
</feature>
<feature type="disulfide bond" evidence="1">
    <location>
        <begin position="36"/>
        <end position="52"/>
    </location>
</feature>
<feature type="disulfide bond" evidence="1">
    <location>
        <begin position="67"/>
        <end position="79"/>
    </location>
</feature>
<feature type="disulfide bond" evidence="1">
    <location>
        <begin position="70"/>
        <end position="86"/>
    </location>
</feature>
<feature type="disulfide bond" evidence="1">
    <location>
        <begin position="101"/>
        <end position="113"/>
    </location>
</feature>
<feature type="disulfide bond" evidence="1">
    <location>
        <begin position="104"/>
        <end position="120"/>
    </location>
</feature>
<feature type="disulfide bond" evidence="1">
    <location>
        <begin position="135"/>
        <end position="147"/>
    </location>
</feature>
<feature type="disulfide bond" evidence="1">
    <location>
        <begin position="138"/>
        <end position="154"/>
    </location>
</feature>
<protein>
    <recommendedName>
        <fullName evidence="4">U-actitoxin-Avd13b</fullName>
    </recommendedName>
    <alternativeName>
        <fullName evidence="5">AnmTX Avi 9a-1</fullName>
    </alternativeName>
    <alternativeName>
        <fullName evidence="3">Peptide toxin AV-2</fullName>
    </alternativeName>
</protein>
<keyword id="KW-0165">Cleavage on pair of basic residues</keyword>
<keyword id="KW-1015">Disulfide bond</keyword>
<keyword id="KW-0166">Nematocyst</keyword>
<keyword id="KW-0964">Secreted</keyword>
<keyword id="KW-0732">Signal</keyword>